<protein>
    <recommendedName>
        <fullName>RsbT co-antagonist protein RsbRC</fullName>
    </recommendedName>
    <alternativeName>
        <fullName>Stressosome protein RsbRC</fullName>
    </alternativeName>
</protein>
<sequence>MAKNKKLFEYLSQHAETISSTWYETIEETDPNSIYASTDPVVIHNLKSQNLAFNYKINRIFIDDEDVYLPILKEWAFEVTQDQEHLKTPIHYIIREFVRVRDLYVSYVKEFVHLNQNTVKSEEAEDLYHALIKAFDLVIHIFIEEMYKNTSLQLQAQKDMITELSAPVIVLFHSVGLLPLIGDIDTVRAKLIMENTLHQCAKKKVTQLYIDLSGVAVIDTMVAHQLFSLIEALRLIGVSSTLSGIRPEIAQTAVQLGLSFEGISLRSTLASAIASDLKLKKV</sequence>
<evidence type="ECO:0000255" key="1">
    <source>
        <dbReference type="PROSITE-ProRule" id="PRU00198"/>
    </source>
</evidence>
<evidence type="ECO:0000269" key="2">
    <source>
    </source>
</evidence>
<evidence type="ECO:0000269" key="3">
    <source>
    </source>
</evidence>
<reference key="1">
    <citation type="journal article" date="1998" name="DNA Res.">
        <title>Sequence analysis of the Bacillus subtilis 168 chromosome region between the sspC and odhA loci (184 degrees-180 degrees).</title>
        <authorList>
            <person name="Ghim S.-Y."/>
            <person name="Choi S.-K."/>
            <person name="Shin B.-S."/>
            <person name="Jeong Y.-M."/>
            <person name="Sorokin A."/>
            <person name="Ehrlich S.D."/>
            <person name="Park S.-H."/>
        </authorList>
    </citation>
    <scope>NUCLEOTIDE SEQUENCE [GENOMIC DNA]</scope>
    <source>
        <strain>168</strain>
    </source>
</reference>
<reference key="2">
    <citation type="journal article" date="1997" name="Nature">
        <title>The complete genome sequence of the Gram-positive bacterium Bacillus subtilis.</title>
        <authorList>
            <person name="Kunst F."/>
            <person name="Ogasawara N."/>
            <person name="Moszer I."/>
            <person name="Albertini A.M."/>
            <person name="Alloni G."/>
            <person name="Azevedo V."/>
            <person name="Bertero M.G."/>
            <person name="Bessieres P."/>
            <person name="Bolotin A."/>
            <person name="Borchert S."/>
            <person name="Borriss R."/>
            <person name="Boursier L."/>
            <person name="Brans A."/>
            <person name="Braun M."/>
            <person name="Brignell S.C."/>
            <person name="Bron S."/>
            <person name="Brouillet S."/>
            <person name="Bruschi C.V."/>
            <person name="Caldwell B."/>
            <person name="Capuano V."/>
            <person name="Carter N.M."/>
            <person name="Choi S.-K."/>
            <person name="Codani J.-J."/>
            <person name="Connerton I.F."/>
            <person name="Cummings N.J."/>
            <person name="Daniel R.A."/>
            <person name="Denizot F."/>
            <person name="Devine K.M."/>
            <person name="Duesterhoeft A."/>
            <person name="Ehrlich S.D."/>
            <person name="Emmerson P.T."/>
            <person name="Entian K.-D."/>
            <person name="Errington J."/>
            <person name="Fabret C."/>
            <person name="Ferrari E."/>
            <person name="Foulger D."/>
            <person name="Fritz C."/>
            <person name="Fujita M."/>
            <person name="Fujita Y."/>
            <person name="Fuma S."/>
            <person name="Galizzi A."/>
            <person name="Galleron N."/>
            <person name="Ghim S.-Y."/>
            <person name="Glaser P."/>
            <person name="Goffeau A."/>
            <person name="Golightly E.J."/>
            <person name="Grandi G."/>
            <person name="Guiseppi G."/>
            <person name="Guy B.J."/>
            <person name="Haga K."/>
            <person name="Haiech J."/>
            <person name="Harwood C.R."/>
            <person name="Henaut A."/>
            <person name="Hilbert H."/>
            <person name="Holsappel S."/>
            <person name="Hosono S."/>
            <person name="Hullo M.-F."/>
            <person name="Itaya M."/>
            <person name="Jones L.-M."/>
            <person name="Joris B."/>
            <person name="Karamata D."/>
            <person name="Kasahara Y."/>
            <person name="Klaerr-Blanchard M."/>
            <person name="Klein C."/>
            <person name="Kobayashi Y."/>
            <person name="Koetter P."/>
            <person name="Koningstein G."/>
            <person name="Krogh S."/>
            <person name="Kumano M."/>
            <person name="Kurita K."/>
            <person name="Lapidus A."/>
            <person name="Lardinois S."/>
            <person name="Lauber J."/>
            <person name="Lazarevic V."/>
            <person name="Lee S.-M."/>
            <person name="Levine A."/>
            <person name="Liu H."/>
            <person name="Masuda S."/>
            <person name="Mauel C."/>
            <person name="Medigue C."/>
            <person name="Medina N."/>
            <person name="Mellado R.P."/>
            <person name="Mizuno M."/>
            <person name="Moestl D."/>
            <person name="Nakai S."/>
            <person name="Noback M."/>
            <person name="Noone D."/>
            <person name="O'Reilly M."/>
            <person name="Ogawa K."/>
            <person name="Ogiwara A."/>
            <person name="Oudega B."/>
            <person name="Park S.-H."/>
            <person name="Parro V."/>
            <person name="Pohl T.M."/>
            <person name="Portetelle D."/>
            <person name="Porwollik S."/>
            <person name="Prescott A.M."/>
            <person name="Presecan E."/>
            <person name="Pujic P."/>
            <person name="Purnelle B."/>
            <person name="Rapoport G."/>
            <person name="Rey M."/>
            <person name="Reynolds S."/>
            <person name="Rieger M."/>
            <person name="Rivolta C."/>
            <person name="Rocha E."/>
            <person name="Roche B."/>
            <person name="Rose M."/>
            <person name="Sadaie Y."/>
            <person name="Sato T."/>
            <person name="Scanlan E."/>
            <person name="Schleich S."/>
            <person name="Schroeter R."/>
            <person name="Scoffone F."/>
            <person name="Sekiguchi J."/>
            <person name="Sekowska A."/>
            <person name="Seror S.J."/>
            <person name="Serror P."/>
            <person name="Shin B.-S."/>
            <person name="Soldo B."/>
            <person name="Sorokin A."/>
            <person name="Tacconi E."/>
            <person name="Takagi T."/>
            <person name="Takahashi H."/>
            <person name="Takemaru K."/>
            <person name="Takeuchi M."/>
            <person name="Tamakoshi A."/>
            <person name="Tanaka T."/>
            <person name="Terpstra P."/>
            <person name="Tognoni A."/>
            <person name="Tosato V."/>
            <person name="Uchiyama S."/>
            <person name="Vandenbol M."/>
            <person name="Vannier F."/>
            <person name="Vassarotti A."/>
            <person name="Viari A."/>
            <person name="Wambutt R."/>
            <person name="Wedler E."/>
            <person name="Wedler H."/>
            <person name="Weitzenegger T."/>
            <person name="Winters P."/>
            <person name="Wipat A."/>
            <person name="Yamamoto H."/>
            <person name="Yamane K."/>
            <person name="Yasumoto K."/>
            <person name="Yata K."/>
            <person name="Yoshida K."/>
            <person name="Yoshikawa H.-F."/>
            <person name="Zumstein E."/>
            <person name="Yoshikawa H."/>
            <person name="Danchin A."/>
        </authorList>
    </citation>
    <scope>NUCLEOTIDE SEQUENCE [LARGE SCALE GENOMIC DNA]</scope>
    <source>
        <strain>168</strain>
    </source>
</reference>
<reference key="3">
    <citation type="journal article" date="2001" name="J. Bacteriol.">
        <title>New family of regulators in the environmental signaling pathway which activates the general stress transcription factor sigma(B) of Bacillus subtilis.</title>
        <authorList>
            <person name="Akbar S."/>
            <person name="Gaidenko T.A."/>
            <person name="Kang C.M."/>
            <person name="O'Reilly M."/>
            <person name="Devine K.M."/>
            <person name="Price C.W."/>
        </authorList>
    </citation>
    <scope>FUNCTION</scope>
    <scope>PHOSPHORYLATION BY RSBT</scope>
    <scope>COMPLEX SUGGESTION</scope>
    <scope>DISRUPTION PHENOTYPE</scope>
    <source>
        <strain>168 / Marburg / ATCC 6051 / DSM 10 / JCM 1465 / NBRC 13719 / NCIMB 3610 / NRRL NRS-744 / VKM B-501</strain>
    </source>
</reference>
<reference key="4">
    <citation type="journal article" date="2004" name="J. Mol. Biol.">
        <title>A multicomponent protein complex mediates environmental stress signaling in Bacillus subtilis.</title>
        <authorList>
            <person name="Kim T.-J."/>
            <person name="Gaidenko T.A."/>
            <person name="Price C.W."/>
        </authorList>
    </citation>
    <scope>FUNCTION</scope>
    <scope>POSSIBLE SUBUNIT</scope>
    <source>
        <strain>168 / Marburg / ATCC 6051 / DSM 10 / JCM 1465 / NBRC 13719 / NCIMB 3610 / NRRL NRS-744 / VKM B-501</strain>
    </source>
</reference>
<reference key="5">
    <citation type="journal article" date="2007" name="Mol. Cell. Proteomics">
        <title>The serine/threonine/tyrosine phosphoproteome of the model bacterium Bacillus subtilis.</title>
        <authorList>
            <person name="Macek B."/>
            <person name="Mijakovic I."/>
            <person name="Olsen J.V."/>
            <person name="Gnad F."/>
            <person name="Kumar C."/>
            <person name="Jensen P.R."/>
            <person name="Mann M."/>
        </authorList>
    </citation>
    <scope>PHOSPHORYLATION [LARGE SCALE ANALYSIS] AT SER-165; SER-174 AND THR-186</scope>
    <scope>IDENTIFICATION BY MASS SPECTROMETRY</scope>
    <source>
        <strain>168</strain>
    </source>
</reference>
<dbReference type="EMBL" id="AF026147">
    <property type="protein sequence ID" value="AAC17856.1"/>
    <property type="molecule type" value="Genomic_DNA"/>
</dbReference>
<dbReference type="EMBL" id="AL009126">
    <property type="protein sequence ID" value="CAB13837.1"/>
    <property type="molecule type" value="Genomic_DNA"/>
</dbReference>
<dbReference type="PIR" id="E69906">
    <property type="entry name" value="E69906"/>
</dbReference>
<dbReference type="RefSeq" id="NP_389827.1">
    <property type="nucleotide sequence ID" value="NC_000964.3"/>
</dbReference>
<dbReference type="RefSeq" id="WP_003231216.1">
    <property type="nucleotide sequence ID" value="NZ_OZ025638.1"/>
</dbReference>
<dbReference type="SMR" id="O31856"/>
<dbReference type="FunCoup" id="O31856">
    <property type="interactions" value="68"/>
</dbReference>
<dbReference type="STRING" id="224308.BSU19450"/>
<dbReference type="iPTMnet" id="O31856"/>
<dbReference type="PaxDb" id="224308-BSU19450"/>
<dbReference type="DNASU" id="940093"/>
<dbReference type="EnsemblBacteria" id="CAB13837">
    <property type="protein sequence ID" value="CAB13837"/>
    <property type="gene ID" value="BSU_19450"/>
</dbReference>
<dbReference type="GeneID" id="940093"/>
<dbReference type="KEGG" id="bsu:BSU19450"/>
<dbReference type="PATRIC" id="fig|224308.179.peg.2127"/>
<dbReference type="eggNOG" id="COG1366">
    <property type="taxonomic scope" value="Bacteria"/>
</dbReference>
<dbReference type="InParanoid" id="O31856"/>
<dbReference type="OrthoDB" id="9800154at2"/>
<dbReference type="PhylomeDB" id="O31856"/>
<dbReference type="BioCyc" id="BSUB:BSU19450-MONOMER"/>
<dbReference type="Proteomes" id="UP000001570">
    <property type="component" value="Chromosome"/>
</dbReference>
<dbReference type="CDD" id="cd07041">
    <property type="entry name" value="STAS_RsbR_RsbS_like"/>
    <property type="match status" value="1"/>
</dbReference>
<dbReference type="Gene3D" id="3.30.750.24">
    <property type="entry name" value="STAS domain"/>
    <property type="match status" value="1"/>
</dbReference>
<dbReference type="InterPro" id="IPR051932">
    <property type="entry name" value="Bact_StressResp_Reg"/>
</dbReference>
<dbReference type="InterPro" id="IPR002645">
    <property type="entry name" value="STAS_dom"/>
</dbReference>
<dbReference type="InterPro" id="IPR036513">
    <property type="entry name" value="STAS_dom_sf"/>
</dbReference>
<dbReference type="PANTHER" id="PTHR33745">
    <property type="entry name" value="RSBT ANTAGONIST PROTEIN RSBS-RELATED"/>
    <property type="match status" value="1"/>
</dbReference>
<dbReference type="PANTHER" id="PTHR33745:SF3">
    <property type="entry name" value="RSBT CO-ANTAGONIST PROTEIN RSBRC"/>
    <property type="match status" value="1"/>
</dbReference>
<dbReference type="Pfam" id="PF01740">
    <property type="entry name" value="STAS"/>
    <property type="match status" value="1"/>
</dbReference>
<dbReference type="SUPFAM" id="SSF52091">
    <property type="entry name" value="SpoIIaa-like"/>
    <property type="match status" value="1"/>
</dbReference>
<dbReference type="PROSITE" id="PS50801">
    <property type="entry name" value="STAS"/>
    <property type="match status" value="1"/>
</dbReference>
<keyword id="KW-0597">Phosphoprotein</keyword>
<keyword id="KW-1185">Reference proteome</keyword>
<accession>O31856</accession>
<accession>Q7BV96</accession>
<name>RSBRC_BACSU</name>
<comment type="function">
    <text>One of 4 functionally non-identical RsbR paralogs, it functions in the environmental signaling branch of the general stress response.</text>
</comment>
<comment type="function">
    <text>Negative regulator of sigma-B activity. Non-phosphorylated RsbS binds to RsbT, preventing its association with RsbU. Requires any one of RsbRA, RsbRB, RsbRC or RsbRD to sequester RsbT. When RsbS and the RsbR paralog(s) are phosphorylated, they release RsbT, which can then bind and activate RsbU.</text>
</comment>
<comment type="subunit">
    <text>Probably present in the stressosome with RsbRA, RsbRB, RsbRD and RsbS.</text>
</comment>
<comment type="PTM">
    <text evidence="2 3">Phosphorylated by RsbT.</text>
</comment>
<comment type="disruption phenotype">
    <text evidence="2">Cells lacking this gene have no visible phenotype in response to salt, ethanol or energy stress. However cells with multiple disruptions (RsbRA, RsbRB, RsbRC and RsbRD) have an increased basal level of sigma-B, indicating this protein is a negative regulator of sigma-B.</text>
</comment>
<proteinExistence type="evidence at protein level"/>
<feature type="chain" id="PRO_0000361686" description="RsbT co-antagonist protein RsbRC">
    <location>
        <begin position="1"/>
        <end position="282"/>
    </location>
</feature>
<feature type="domain" description="STAS" evidence="1">
    <location>
        <begin position="165"/>
        <end position="276"/>
    </location>
</feature>
<feature type="modified residue" description="Phosphoserine" evidence="3">
    <location>
        <position position="165"/>
    </location>
</feature>
<feature type="modified residue" description="Phosphoserine" evidence="3">
    <location>
        <position position="174"/>
    </location>
</feature>
<feature type="modified residue" description="Phosphothreonine" evidence="3">
    <location>
        <position position="186"/>
    </location>
</feature>
<gene>
    <name type="primary">rsbRC</name>
    <name type="synonym">yojH</name>
    <name type="ordered locus">BSU19450</name>
</gene>
<organism>
    <name type="scientific">Bacillus subtilis (strain 168)</name>
    <dbReference type="NCBI Taxonomy" id="224308"/>
    <lineage>
        <taxon>Bacteria</taxon>
        <taxon>Bacillati</taxon>
        <taxon>Bacillota</taxon>
        <taxon>Bacilli</taxon>
        <taxon>Bacillales</taxon>
        <taxon>Bacillaceae</taxon>
        <taxon>Bacillus</taxon>
    </lineage>
</organism>